<name>DPO4_STRP8</name>
<gene>
    <name evidence="1" type="primary">dinB</name>
    <name type="synonym">dinP</name>
    <name type="ordered locus">spyM18_1910</name>
</gene>
<comment type="function">
    <text evidence="1">Poorly processive, error-prone DNA polymerase involved in untargeted mutagenesis. Copies undamaged DNA at stalled replication forks, which arise in vivo from mismatched or misaligned primer ends. These misaligned primers can be extended by PolIV. Exhibits no 3'-5' exonuclease (proofreading) activity. May be involved in translesional synthesis, in conjunction with the beta clamp from PolIII.</text>
</comment>
<comment type="catalytic activity">
    <reaction evidence="1">
        <text>DNA(n) + a 2'-deoxyribonucleoside 5'-triphosphate = DNA(n+1) + diphosphate</text>
        <dbReference type="Rhea" id="RHEA:22508"/>
        <dbReference type="Rhea" id="RHEA-COMP:17339"/>
        <dbReference type="Rhea" id="RHEA-COMP:17340"/>
        <dbReference type="ChEBI" id="CHEBI:33019"/>
        <dbReference type="ChEBI" id="CHEBI:61560"/>
        <dbReference type="ChEBI" id="CHEBI:173112"/>
        <dbReference type="EC" id="2.7.7.7"/>
    </reaction>
</comment>
<comment type="cofactor">
    <cofactor evidence="1">
        <name>Mg(2+)</name>
        <dbReference type="ChEBI" id="CHEBI:18420"/>
    </cofactor>
    <text evidence="1">Binds 2 magnesium ions per subunit.</text>
</comment>
<comment type="subunit">
    <text evidence="1">Monomer.</text>
</comment>
<comment type="subcellular location">
    <subcellularLocation>
        <location evidence="1">Cytoplasm</location>
    </subcellularLocation>
</comment>
<comment type="similarity">
    <text evidence="1">Belongs to the DNA polymerase type-Y family.</text>
</comment>
<accession>Q8NZI1</accession>
<proteinExistence type="inferred from homology"/>
<protein>
    <recommendedName>
        <fullName evidence="1">DNA polymerase IV</fullName>
        <shortName evidence="1">Pol IV</shortName>
        <ecNumber evidence="1">2.7.7.7</ecNumber>
    </recommendedName>
</protein>
<evidence type="ECO:0000255" key="1">
    <source>
        <dbReference type="HAMAP-Rule" id="MF_01113"/>
    </source>
</evidence>
<sequence>MLIFPLINDTSRKIIHIDMDAFFAAVEERDNPALKGKPVVIGKDPRETGGRGVVSTCNYEARKYGIHSAMSSKEAYERCPKAIFISGNYEKYRTVGDQIRRIFKRYTDLVEPMSIDEAYLDVTDNKLGIKSAVKIAKLIQHDIWKEVGLTCSAGVSYNKFLAKLASDFEKPHGLTLVLKEDALCFLAKLPIEKFHGVGKKSVEKLHDMGIYTGQDLLAVPEMTLIDHFGRFGFDLYRKARGISNSPVKSDRIRKSIGSERTYAKLLYQETDIKAEISKNAKRVAALLQDHKKLGKTIVLKVRYADFTTLTKRVTLPELTRNAAQIEQVAGDIFDSLSENPAGIRLLGVTMTNLEDKVADISLDL</sequence>
<dbReference type="EC" id="2.7.7.7" evidence="1"/>
<dbReference type="EMBL" id="AE009949">
    <property type="protein sequence ID" value="AAL98412.1"/>
    <property type="molecule type" value="Genomic_DNA"/>
</dbReference>
<dbReference type="RefSeq" id="WP_011018195.1">
    <property type="nucleotide sequence ID" value="NC_003485.1"/>
</dbReference>
<dbReference type="SMR" id="Q8NZI1"/>
<dbReference type="KEGG" id="spm:spyM18_1910"/>
<dbReference type="HOGENOM" id="CLU_012348_1_2_9"/>
<dbReference type="GO" id="GO:0005829">
    <property type="term" value="C:cytosol"/>
    <property type="evidence" value="ECO:0007669"/>
    <property type="project" value="TreeGrafter"/>
</dbReference>
<dbReference type="GO" id="GO:0003684">
    <property type="term" value="F:damaged DNA binding"/>
    <property type="evidence" value="ECO:0007669"/>
    <property type="project" value="InterPro"/>
</dbReference>
<dbReference type="GO" id="GO:0003887">
    <property type="term" value="F:DNA-directed DNA polymerase activity"/>
    <property type="evidence" value="ECO:0007669"/>
    <property type="project" value="UniProtKB-UniRule"/>
</dbReference>
<dbReference type="GO" id="GO:0000287">
    <property type="term" value="F:magnesium ion binding"/>
    <property type="evidence" value="ECO:0007669"/>
    <property type="project" value="UniProtKB-UniRule"/>
</dbReference>
<dbReference type="GO" id="GO:0006261">
    <property type="term" value="P:DNA-templated DNA replication"/>
    <property type="evidence" value="ECO:0007669"/>
    <property type="project" value="UniProtKB-UniRule"/>
</dbReference>
<dbReference type="GO" id="GO:0042276">
    <property type="term" value="P:error-prone translesion synthesis"/>
    <property type="evidence" value="ECO:0007669"/>
    <property type="project" value="TreeGrafter"/>
</dbReference>
<dbReference type="GO" id="GO:0009432">
    <property type="term" value="P:SOS response"/>
    <property type="evidence" value="ECO:0007669"/>
    <property type="project" value="TreeGrafter"/>
</dbReference>
<dbReference type="CDD" id="cd03586">
    <property type="entry name" value="PolY_Pol_IV_kappa"/>
    <property type="match status" value="1"/>
</dbReference>
<dbReference type="FunFam" id="3.30.1490.100:FF:000004">
    <property type="entry name" value="DNA polymerase IV"/>
    <property type="match status" value="1"/>
</dbReference>
<dbReference type="FunFam" id="3.40.1170.60:FF:000001">
    <property type="entry name" value="DNA polymerase IV"/>
    <property type="match status" value="1"/>
</dbReference>
<dbReference type="Gene3D" id="3.30.70.270">
    <property type="match status" value="1"/>
</dbReference>
<dbReference type="Gene3D" id="3.40.1170.60">
    <property type="match status" value="1"/>
</dbReference>
<dbReference type="Gene3D" id="1.10.150.20">
    <property type="entry name" value="5' to 3' exonuclease, C-terminal subdomain"/>
    <property type="match status" value="1"/>
</dbReference>
<dbReference type="Gene3D" id="3.30.1490.100">
    <property type="entry name" value="DNA polymerase, Y-family, little finger domain"/>
    <property type="match status" value="1"/>
</dbReference>
<dbReference type="HAMAP" id="MF_01113">
    <property type="entry name" value="DNApol_IV"/>
    <property type="match status" value="1"/>
</dbReference>
<dbReference type="InterPro" id="IPR043502">
    <property type="entry name" value="DNA/RNA_pol_sf"/>
</dbReference>
<dbReference type="InterPro" id="IPR036775">
    <property type="entry name" value="DNA_pol_Y-fam_lit_finger_sf"/>
</dbReference>
<dbReference type="InterPro" id="IPR017961">
    <property type="entry name" value="DNA_pol_Y-fam_little_finger"/>
</dbReference>
<dbReference type="InterPro" id="IPR050116">
    <property type="entry name" value="DNA_polymerase-Y"/>
</dbReference>
<dbReference type="InterPro" id="IPR022880">
    <property type="entry name" value="DNApol_IV"/>
</dbReference>
<dbReference type="InterPro" id="IPR024728">
    <property type="entry name" value="PolY_HhH_motif"/>
</dbReference>
<dbReference type="InterPro" id="IPR043128">
    <property type="entry name" value="Rev_trsase/Diguanyl_cyclase"/>
</dbReference>
<dbReference type="InterPro" id="IPR001126">
    <property type="entry name" value="UmuC"/>
</dbReference>
<dbReference type="NCBIfam" id="NF002677">
    <property type="entry name" value="PRK02406.1"/>
    <property type="match status" value="1"/>
</dbReference>
<dbReference type="NCBIfam" id="NF010731">
    <property type="entry name" value="PRK14133.1"/>
    <property type="match status" value="1"/>
</dbReference>
<dbReference type="PANTHER" id="PTHR11076:SF33">
    <property type="entry name" value="DNA POLYMERASE KAPPA"/>
    <property type="match status" value="1"/>
</dbReference>
<dbReference type="PANTHER" id="PTHR11076">
    <property type="entry name" value="DNA REPAIR POLYMERASE UMUC / TRANSFERASE FAMILY MEMBER"/>
    <property type="match status" value="1"/>
</dbReference>
<dbReference type="Pfam" id="PF00817">
    <property type="entry name" value="IMS"/>
    <property type="match status" value="1"/>
</dbReference>
<dbReference type="Pfam" id="PF11799">
    <property type="entry name" value="IMS_C"/>
    <property type="match status" value="1"/>
</dbReference>
<dbReference type="Pfam" id="PF11798">
    <property type="entry name" value="IMS_HHH"/>
    <property type="match status" value="1"/>
</dbReference>
<dbReference type="SUPFAM" id="SSF56672">
    <property type="entry name" value="DNA/RNA polymerases"/>
    <property type="match status" value="1"/>
</dbReference>
<dbReference type="SUPFAM" id="SSF100879">
    <property type="entry name" value="Lesion bypass DNA polymerase (Y-family), little finger domain"/>
    <property type="match status" value="1"/>
</dbReference>
<dbReference type="PROSITE" id="PS50173">
    <property type="entry name" value="UMUC"/>
    <property type="match status" value="1"/>
</dbReference>
<organism>
    <name type="scientific">Streptococcus pyogenes serotype M18 (strain MGAS8232)</name>
    <dbReference type="NCBI Taxonomy" id="186103"/>
    <lineage>
        <taxon>Bacteria</taxon>
        <taxon>Bacillati</taxon>
        <taxon>Bacillota</taxon>
        <taxon>Bacilli</taxon>
        <taxon>Lactobacillales</taxon>
        <taxon>Streptococcaceae</taxon>
        <taxon>Streptococcus</taxon>
    </lineage>
</organism>
<keyword id="KW-0963">Cytoplasm</keyword>
<keyword id="KW-0227">DNA damage</keyword>
<keyword id="KW-0234">DNA repair</keyword>
<keyword id="KW-0235">DNA replication</keyword>
<keyword id="KW-0238">DNA-binding</keyword>
<keyword id="KW-0239">DNA-directed DNA polymerase</keyword>
<keyword id="KW-0460">Magnesium</keyword>
<keyword id="KW-0479">Metal-binding</keyword>
<keyword id="KW-0515">Mutator protein</keyword>
<keyword id="KW-0548">Nucleotidyltransferase</keyword>
<keyword id="KW-0808">Transferase</keyword>
<feature type="chain" id="PRO_0000173959" description="DNA polymerase IV">
    <location>
        <begin position="1"/>
        <end position="364"/>
    </location>
</feature>
<feature type="domain" description="UmuC" evidence="1">
    <location>
        <begin position="14"/>
        <end position="198"/>
    </location>
</feature>
<feature type="active site" evidence="1">
    <location>
        <position position="117"/>
    </location>
</feature>
<feature type="binding site" evidence="1">
    <location>
        <position position="18"/>
    </location>
    <ligand>
        <name>Mg(2+)</name>
        <dbReference type="ChEBI" id="CHEBI:18420"/>
    </ligand>
</feature>
<feature type="binding site" evidence="1">
    <location>
        <position position="116"/>
    </location>
    <ligand>
        <name>Mg(2+)</name>
        <dbReference type="ChEBI" id="CHEBI:18420"/>
    </ligand>
</feature>
<feature type="site" description="Substrate discrimination" evidence="1">
    <location>
        <position position="23"/>
    </location>
</feature>
<reference key="1">
    <citation type="journal article" date="2002" name="Proc. Natl. Acad. Sci. U.S.A.">
        <title>Genome sequence and comparative microarray analysis of serotype M18 group A Streptococcus strains associated with acute rheumatic fever outbreaks.</title>
        <authorList>
            <person name="Smoot J.C."/>
            <person name="Barbian K.D."/>
            <person name="Van Gompel J.J."/>
            <person name="Smoot L.M."/>
            <person name="Chaussee M.S."/>
            <person name="Sylva G.L."/>
            <person name="Sturdevant D.E."/>
            <person name="Ricklefs S.M."/>
            <person name="Porcella S.F."/>
            <person name="Parkins L.D."/>
            <person name="Beres S.B."/>
            <person name="Campbell D.S."/>
            <person name="Smith T.M."/>
            <person name="Zhang Q."/>
            <person name="Kapur V."/>
            <person name="Daly J.A."/>
            <person name="Veasy L.G."/>
            <person name="Musser J.M."/>
        </authorList>
    </citation>
    <scope>NUCLEOTIDE SEQUENCE [LARGE SCALE GENOMIC DNA]</scope>
    <source>
        <strain>MGAS8232</strain>
    </source>
</reference>